<name>YBEY_SYNE7</name>
<keyword id="KW-0963">Cytoplasm</keyword>
<keyword id="KW-0255">Endonuclease</keyword>
<keyword id="KW-0378">Hydrolase</keyword>
<keyword id="KW-0479">Metal-binding</keyword>
<keyword id="KW-0540">Nuclease</keyword>
<keyword id="KW-1185">Reference proteome</keyword>
<keyword id="KW-0690">Ribosome biogenesis</keyword>
<keyword id="KW-0698">rRNA processing</keyword>
<keyword id="KW-0862">Zinc</keyword>
<proteinExistence type="inferred from homology"/>
<protein>
    <recommendedName>
        <fullName evidence="1">Endoribonuclease YbeY</fullName>
        <ecNumber evidence="1">3.1.-.-</ecNumber>
    </recommendedName>
</protein>
<gene>
    <name evidence="1" type="primary">ybeY</name>
    <name type="ordered locus">Synpcc7942_0402</name>
</gene>
<evidence type="ECO:0000255" key="1">
    <source>
        <dbReference type="HAMAP-Rule" id="MF_00009"/>
    </source>
</evidence>
<dbReference type="EC" id="3.1.-.-" evidence="1"/>
<dbReference type="EMBL" id="CP000100">
    <property type="protein sequence ID" value="ABB56434.1"/>
    <property type="molecule type" value="Genomic_DNA"/>
</dbReference>
<dbReference type="RefSeq" id="WP_011243425.1">
    <property type="nucleotide sequence ID" value="NZ_JACJTX010000002.1"/>
</dbReference>
<dbReference type="SMR" id="Q31R85"/>
<dbReference type="STRING" id="1140.Synpcc7942_0402"/>
<dbReference type="PaxDb" id="1140-Synpcc7942_0402"/>
<dbReference type="GeneID" id="72429222"/>
<dbReference type="KEGG" id="syf:Synpcc7942_0402"/>
<dbReference type="eggNOG" id="COG0319">
    <property type="taxonomic scope" value="Bacteria"/>
</dbReference>
<dbReference type="HOGENOM" id="CLU_106710_3_0_3"/>
<dbReference type="OrthoDB" id="9807740at2"/>
<dbReference type="BioCyc" id="SYNEL:SYNPCC7942_0402-MONOMER"/>
<dbReference type="Proteomes" id="UP000889800">
    <property type="component" value="Chromosome"/>
</dbReference>
<dbReference type="GO" id="GO:0005737">
    <property type="term" value="C:cytoplasm"/>
    <property type="evidence" value="ECO:0007669"/>
    <property type="project" value="UniProtKB-SubCell"/>
</dbReference>
<dbReference type="GO" id="GO:0004222">
    <property type="term" value="F:metalloendopeptidase activity"/>
    <property type="evidence" value="ECO:0007669"/>
    <property type="project" value="InterPro"/>
</dbReference>
<dbReference type="GO" id="GO:0004521">
    <property type="term" value="F:RNA endonuclease activity"/>
    <property type="evidence" value="ECO:0007669"/>
    <property type="project" value="UniProtKB-UniRule"/>
</dbReference>
<dbReference type="GO" id="GO:0008270">
    <property type="term" value="F:zinc ion binding"/>
    <property type="evidence" value="ECO:0007669"/>
    <property type="project" value="UniProtKB-UniRule"/>
</dbReference>
<dbReference type="GO" id="GO:0006364">
    <property type="term" value="P:rRNA processing"/>
    <property type="evidence" value="ECO:0007669"/>
    <property type="project" value="UniProtKB-UniRule"/>
</dbReference>
<dbReference type="Gene3D" id="3.40.390.30">
    <property type="entry name" value="Metalloproteases ('zincins'), catalytic domain"/>
    <property type="match status" value="1"/>
</dbReference>
<dbReference type="HAMAP" id="MF_00009">
    <property type="entry name" value="Endoribonucl_YbeY"/>
    <property type="match status" value="1"/>
</dbReference>
<dbReference type="InterPro" id="IPR023091">
    <property type="entry name" value="MetalPrtase_cat_dom_sf_prd"/>
</dbReference>
<dbReference type="InterPro" id="IPR002036">
    <property type="entry name" value="YbeY"/>
</dbReference>
<dbReference type="InterPro" id="IPR020549">
    <property type="entry name" value="YbeY_CS"/>
</dbReference>
<dbReference type="NCBIfam" id="TIGR00043">
    <property type="entry name" value="rRNA maturation RNase YbeY"/>
    <property type="match status" value="1"/>
</dbReference>
<dbReference type="PANTHER" id="PTHR46986">
    <property type="entry name" value="ENDORIBONUCLEASE YBEY, CHLOROPLASTIC"/>
    <property type="match status" value="1"/>
</dbReference>
<dbReference type="PANTHER" id="PTHR46986:SF1">
    <property type="entry name" value="ENDORIBONUCLEASE YBEY, CHLOROPLASTIC"/>
    <property type="match status" value="1"/>
</dbReference>
<dbReference type="Pfam" id="PF02130">
    <property type="entry name" value="YbeY"/>
    <property type="match status" value="1"/>
</dbReference>
<dbReference type="SUPFAM" id="SSF55486">
    <property type="entry name" value="Metalloproteases ('zincins'), catalytic domain"/>
    <property type="match status" value="1"/>
</dbReference>
<dbReference type="PROSITE" id="PS01306">
    <property type="entry name" value="UPF0054"/>
    <property type="match status" value="1"/>
</dbReference>
<sequence>MALLDLTVQMACSDRLPDLPWQDWLDRWLTDIQPQLPEDWQAPTYEACLRFVDDAEIQQLNRDYRQLDKPTDVLAFAALEDELALGFDPEEPLYLGDVIISVPTAQRQAQGHALETELVWLSAHGLLHLLGWDHPNEEQLAAMLTQQERWLQLVAVPVPPRWLDEVSQPPSSEP</sequence>
<feature type="chain" id="PRO_0000284337" description="Endoribonuclease YbeY">
    <location>
        <begin position="1"/>
        <end position="174"/>
    </location>
</feature>
<feature type="binding site" evidence="1">
    <location>
        <position position="124"/>
    </location>
    <ligand>
        <name>Zn(2+)</name>
        <dbReference type="ChEBI" id="CHEBI:29105"/>
        <note>catalytic</note>
    </ligand>
</feature>
<feature type="binding site" evidence="1">
    <location>
        <position position="128"/>
    </location>
    <ligand>
        <name>Zn(2+)</name>
        <dbReference type="ChEBI" id="CHEBI:29105"/>
        <note>catalytic</note>
    </ligand>
</feature>
<feature type="binding site" evidence="1">
    <location>
        <position position="134"/>
    </location>
    <ligand>
        <name>Zn(2+)</name>
        <dbReference type="ChEBI" id="CHEBI:29105"/>
        <note>catalytic</note>
    </ligand>
</feature>
<comment type="function">
    <text evidence="1">Single strand-specific metallo-endoribonuclease involved in late-stage 70S ribosome quality control and in maturation of the 3' terminus of the 16S rRNA.</text>
</comment>
<comment type="cofactor">
    <cofactor evidence="1">
        <name>Zn(2+)</name>
        <dbReference type="ChEBI" id="CHEBI:29105"/>
    </cofactor>
    <text evidence="1">Binds 1 zinc ion.</text>
</comment>
<comment type="subcellular location">
    <subcellularLocation>
        <location evidence="1">Cytoplasm</location>
    </subcellularLocation>
</comment>
<comment type="similarity">
    <text evidence="1">Belongs to the endoribonuclease YbeY family.</text>
</comment>
<organism>
    <name type="scientific">Synechococcus elongatus (strain ATCC 33912 / PCC 7942 / FACHB-805)</name>
    <name type="common">Anacystis nidulans R2</name>
    <dbReference type="NCBI Taxonomy" id="1140"/>
    <lineage>
        <taxon>Bacteria</taxon>
        <taxon>Bacillati</taxon>
        <taxon>Cyanobacteriota</taxon>
        <taxon>Cyanophyceae</taxon>
        <taxon>Synechococcales</taxon>
        <taxon>Synechococcaceae</taxon>
        <taxon>Synechococcus</taxon>
    </lineage>
</organism>
<reference key="1">
    <citation type="submission" date="2005-08" db="EMBL/GenBank/DDBJ databases">
        <title>Complete sequence of chromosome 1 of Synechococcus elongatus PCC 7942.</title>
        <authorList>
            <consortium name="US DOE Joint Genome Institute"/>
            <person name="Copeland A."/>
            <person name="Lucas S."/>
            <person name="Lapidus A."/>
            <person name="Barry K."/>
            <person name="Detter J.C."/>
            <person name="Glavina T."/>
            <person name="Hammon N."/>
            <person name="Israni S."/>
            <person name="Pitluck S."/>
            <person name="Schmutz J."/>
            <person name="Larimer F."/>
            <person name="Land M."/>
            <person name="Kyrpides N."/>
            <person name="Lykidis A."/>
            <person name="Golden S."/>
            <person name="Richardson P."/>
        </authorList>
    </citation>
    <scope>NUCLEOTIDE SEQUENCE [LARGE SCALE GENOMIC DNA]</scope>
    <source>
        <strain>ATCC 33912 / PCC 7942 / FACHB-805</strain>
    </source>
</reference>
<accession>Q31R85</accession>